<accession>Q39SM1</accession>
<gene>
    <name evidence="1" type="primary">cmoA</name>
    <name type="ordered locus">Gmet_2532</name>
</gene>
<sequence>MTHKTDAIYAAPLQKMIDFQFDERVVAVFPDMIQRSVPGYGMIISNIGIVAAKYAQAGSHCYDLGCSLGAVSLAMRQRITQPDCDIIAVDNSPAMIARGRELLALDTAPTVPVTMICADLQEVAIENASVVVLNFTLQFIPPAERLALLERIHAGLRPGGVLILSEKIAFGEPGRQQFHEELHHDFKRANGYSDLEISQKRSALEKVLIPETLACHHERLQAAGFSFSELWFQCFNFASLVAMK</sequence>
<evidence type="ECO:0000255" key="1">
    <source>
        <dbReference type="HAMAP-Rule" id="MF_01589"/>
    </source>
</evidence>
<keyword id="KW-1185">Reference proteome</keyword>
<keyword id="KW-0949">S-adenosyl-L-methionine</keyword>
<keyword id="KW-0808">Transferase</keyword>
<proteinExistence type="inferred from homology"/>
<dbReference type="EC" id="2.1.3.-" evidence="1"/>
<dbReference type="EMBL" id="CP000148">
    <property type="protein sequence ID" value="ABB32753.2"/>
    <property type="molecule type" value="Genomic_DNA"/>
</dbReference>
<dbReference type="RefSeq" id="WP_011366068.1">
    <property type="nucleotide sequence ID" value="NC_007517.1"/>
</dbReference>
<dbReference type="SMR" id="Q39SM1"/>
<dbReference type="STRING" id="269799.Gmet_2532"/>
<dbReference type="KEGG" id="gme:Gmet_2532"/>
<dbReference type="eggNOG" id="COG4106">
    <property type="taxonomic scope" value="Bacteria"/>
</dbReference>
<dbReference type="HOGENOM" id="CLU_078475_0_0_7"/>
<dbReference type="Proteomes" id="UP000007073">
    <property type="component" value="Chromosome"/>
</dbReference>
<dbReference type="GO" id="GO:0016743">
    <property type="term" value="F:carboxyl- or carbamoyltransferase activity"/>
    <property type="evidence" value="ECO:0007669"/>
    <property type="project" value="UniProtKB-UniRule"/>
</dbReference>
<dbReference type="GO" id="GO:1904047">
    <property type="term" value="F:S-adenosyl-L-methionine binding"/>
    <property type="evidence" value="ECO:0007669"/>
    <property type="project" value="UniProtKB-UniRule"/>
</dbReference>
<dbReference type="GO" id="GO:0002098">
    <property type="term" value="P:tRNA wobble uridine modification"/>
    <property type="evidence" value="ECO:0007669"/>
    <property type="project" value="InterPro"/>
</dbReference>
<dbReference type="CDD" id="cd02440">
    <property type="entry name" value="AdoMet_MTases"/>
    <property type="match status" value="1"/>
</dbReference>
<dbReference type="Gene3D" id="3.40.50.150">
    <property type="entry name" value="Vaccinia Virus protein VP39"/>
    <property type="match status" value="1"/>
</dbReference>
<dbReference type="HAMAP" id="MF_01589">
    <property type="entry name" value="Cx_SAM_synthase"/>
    <property type="match status" value="1"/>
</dbReference>
<dbReference type="InterPro" id="IPR005271">
    <property type="entry name" value="CmoA"/>
</dbReference>
<dbReference type="InterPro" id="IPR041698">
    <property type="entry name" value="Methyltransf_25"/>
</dbReference>
<dbReference type="InterPro" id="IPR029063">
    <property type="entry name" value="SAM-dependent_MTases_sf"/>
</dbReference>
<dbReference type="NCBIfam" id="TIGR00740">
    <property type="entry name" value="carboxy-S-adenosyl-L-methionine synthase CmoA"/>
    <property type="match status" value="1"/>
</dbReference>
<dbReference type="NCBIfam" id="NF011995">
    <property type="entry name" value="PRK15451.1"/>
    <property type="match status" value="1"/>
</dbReference>
<dbReference type="PANTHER" id="PTHR43861:SF2">
    <property type="entry name" value="CARBOXY-S-ADENOSYL-L-METHIONINE SYNTHASE"/>
    <property type="match status" value="1"/>
</dbReference>
<dbReference type="PANTHER" id="PTHR43861">
    <property type="entry name" value="TRANS-ACONITATE 2-METHYLTRANSFERASE-RELATED"/>
    <property type="match status" value="1"/>
</dbReference>
<dbReference type="Pfam" id="PF13649">
    <property type="entry name" value="Methyltransf_25"/>
    <property type="match status" value="1"/>
</dbReference>
<dbReference type="PIRSF" id="PIRSF006325">
    <property type="entry name" value="MeTrfase_bac"/>
    <property type="match status" value="1"/>
</dbReference>
<dbReference type="SUPFAM" id="SSF53335">
    <property type="entry name" value="S-adenosyl-L-methionine-dependent methyltransferases"/>
    <property type="match status" value="1"/>
</dbReference>
<feature type="chain" id="PRO_0000314331" description="Carboxy-S-adenosyl-L-methionine synthase">
    <location>
        <begin position="1"/>
        <end position="244"/>
    </location>
</feature>
<feature type="binding site" evidence="1">
    <location>
        <position position="40"/>
    </location>
    <ligand>
        <name>S-adenosyl-L-methionine</name>
        <dbReference type="ChEBI" id="CHEBI:59789"/>
    </ligand>
</feature>
<feature type="binding site" evidence="1">
    <location>
        <begin position="65"/>
        <end position="67"/>
    </location>
    <ligand>
        <name>S-adenosyl-L-methionine</name>
        <dbReference type="ChEBI" id="CHEBI:59789"/>
    </ligand>
</feature>
<feature type="binding site" evidence="1">
    <location>
        <begin position="90"/>
        <end position="91"/>
    </location>
    <ligand>
        <name>S-adenosyl-L-methionine</name>
        <dbReference type="ChEBI" id="CHEBI:59789"/>
    </ligand>
</feature>
<feature type="binding site" evidence="1">
    <location>
        <begin position="119"/>
        <end position="120"/>
    </location>
    <ligand>
        <name>S-adenosyl-L-methionine</name>
        <dbReference type="ChEBI" id="CHEBI:59789"/>
    </ligand>
</feature>
<feature type="binding site" evidence="1">
    <location>
        <position position="134"/>
    </location>
    <ligand>
        <name>S-adenosyl-L-methionine</name>
        <dbReference type="ChEBI" id="CHEBI:59789"/>
    </ligand>
</feature>
<feature type="binding site" evidence="1">
    <location>
        <position position="201"/>
    </location>
    <ligand>
        <name>S-adenosyl-L-methionine</name>
        <dbReference type="ChEBI" id="CHEBI:59789"/>
    </ligand>
</feature>
<name>CMOA_GEOMG</name>
<comment type="function">
    <text evidence="1">Catalyzes the conversion of S-adenosyl-L-methionine (SAM) to carboxy-S-adenosyl-L-methionine (Cx-SAM).</text>
</comment>
<comment type="catalytic activity">
    <reaction evidence="1">
        <text>prephenate + S-adenosyl-L-methionine = carboxy-S-adenosyl-L-methionine + 3-phenylpyruvate + H2O</text>
        <dbReference type="Rhea" id="RHEA:51692"/>
        <dbReference type="ChEBI" id="CHEBI:15377"/>
        <dbReference type="ChEBI" id="CHEBI:18005"/>
        <dbReference type="ChEBI" id="CHEBI:29934"/>
        <dbReference type="ChEBI" id="CHEBI:59789"/>
        <dbReference type="ChEBI" id="CHEBI:134278"/>
    </reaction>
</comment>
<comment type="subunit">
    <text evidence="1">Homodimer.</text>
</comment>
<comment type="similarity">
    <text evidence="1">Belongs to the class I-like SAM-binding methyltransferase superfamily. Cx-SAM synthase family.</text>
</comment>
<protein>
    <recommendedName>
        <fullName evidence="1">Carboxy-S-adenosyl-L-methionine synthase</fullName>
        <shortName evidence="1">Cx-SAM synthase</shortName>
        <ecNumber evidence="1">2.1.3.-</ecNumber>
    </recommendedName>
</protein>
<reference key="1">
    <citation type="journal article" date="2009" name="BMC Microbiol.">
        <title>The genome sequence of Geobacter metallireducens: features of metabolism, physiology and regulation common and dissimilar to Geobacter sulfurreducens.</title>
        <authorList>
            <person name="Aklujkar M."/>
            <person name="Krushkal J."/>
            <person name="DiBartolo G."/>
            <person name="Lapidus A."/>
            <person name="Land M.L."/>
            <person name="Lovley D.R."/>
        </authorList>
    </citation>
    <scope>NUCLEOTIDE SEQUENCE [LARGE SCALE GENOMIC DNA]</scope>
    <source>
        <strain>ATCC 53774 / DSM 7210 / GS-15</strain>
    </source>
</reference>
<organism>
    <name type="scientific">Geobacter metallireducens (strain ATCC 53774 / DSM 7210 / GS-15)</name>
    <dbReference type="NCBI Taxonomy" id="269799"/>
    <lineage>
        <taxon>Bacteria</taxon>
        <taxon>Pseudomonadati</taxon>
        <taxon>Thermodesulfobacteriota</taxon>
        <taxon>Desulfuromonadia</taxon>
        <taxon>Geobacterales</taxon>
        <taxon>Geobacteraceae</taxon>
        <taxon>Geobacter</taxon>
    </lineage>
</organism>